<accession>P0DSZ5</accession>
<accession>P33827</accession>
<accession>Q76PY3</accession>
<accession>Q89165</accession>
<protein>
    <recommendedName>
        <fullName>Transcript termination protein OPG145</fullName>
        <ecNumber>3.6.4.-</ecNumber>
    </recommendedName>
    <alternativeName>
        <fullName>56 kDa abortive late protein</fullName>
    </alternativeName>
</protein>
<organism>
    <name type="scientific">Variola virus (isolate Human/India/Ind3/1967)</name>
    <name type="common">VARV</name>
    <name type="synonym">Smallpox virus</name>
    <dbReference type="NCBI Taxonomy" id="587200"/>
    <lineage>
        <taxon>Viruses</taxon>
        <taxon>Varidnaviria</taxon>
        <taxon>Bamfordvirae</taxon>
        <taxon>Nucleocytoviricota</taxon>
        <taxon>Pokkesviricetes</taxon>
        <taxon>Chitovirales</taxon>
        <taxon>Poxviridae</taxon>
        <taxon>Chordopoxvirinae</taxon>
        <taxon>Orthopoxvirus</taxon>
        <taxon>Variola virus</taxon>
    </lineage>
</organism>
<organismHost>
    <name type="scientific">Homo sapiens</name>
    <name type="common">Human</name>
    <dbReference type="NCBI Taxonomy" id="9606"/>
</organismHost>
<name>PG145_VAR67</name>
<evidence type="ECO:0000250" key="1">
    <source>
        <dbReference type="UniProtKB" id="P16712"/>
    </source>
</evidence>
<evidence type="ECO:0000255" key="2">
    <source>
        <dbReference type="PROSITE-ProRule" id="PRU00541"/>
    </source>
</evidence>
<evidence type="ECO:0000305" key="3"/>
<keyword id="KW-0067">ATP-binding</keyword>
<keyword id="KW-0238">DNA-binding</keyword>
<keyword id="KW-0347">Helicase</keyword>
<keyword id="KW-0378">Hydrolase</keyword>
<keyword id="KW-0426">Late protein</keyword>
<keyword id="KW-0547">Nucleotide-binding</keyword>
<keyword id="KW-0597">Phosphoprotein</keyword>
<keyword id="KW-1185">Reference proteome</keyword>
<keyword id="KW-0804">Transcription</keyword>
<keyword id="KW-0805">Transcription regulation</keyword>
<keyword id="KW-0806">Transcription termination</keyword>
<keyword id="KW-0946">Virion</keyword>
<comment type="function">
    <text evidence="1">DNA helicase which seems to act as a postreplicative transcription termination factor. Involved in ATP-dependent release of nascent RNA. Forms a stable complex with single-stranded DNA, and to a lesser extent RNA.</text>
</comment>
<comment type="subunit">
    <text evidence="1">Interacts with OPG087. Might be part of a transcription complex composed at least of OPG087, OPG110, and OPG145.</text>
</comment>
<comment type="subcellular location">
    <subcellularLocation>
        <location evidence="1">Virion</location>
    </subcellularLocation>
    <text evidence="1">Localizes to the virion core.</text>
</comment>
<comment type="similarity">
    <text evidence="3">Belongs to the helicase family. Poxviruses subfamily.</text>
</comment>
<gene>
    <name type="primary">OPG145</name>
    <name type="ORF">A18R</name>
    <name type="ORF">A19R</name>
</gene>
<sequence>MSLLKMEYNLYAELKKITCGQSLSLFNEDGDFVEVEPGSLFKFLIPKGFYSSPSVKTSLVFETLTTTDNKITSINPTNAPKLYPLQHKVVSEVVSNMRKMIKLKRPLYITLHLACGFGKTITTCYLMATHGRKTVICVPNKMLIHQWKTQVEAVGLEHKISIDGVSSLLKELKTQSPDVLIVVSRHLTNDAFCKYINKHYDLFILDESHTYNLMNNTAVTRFLAYYPPMMCYFLTATPRPSNRIYCNSIINIAKLSDLKKTIYAVDSFFEPYSTDNIRHMIKRLDGPSNKYHIYTEKLLSVDEPRNQLILNTLVEEFKSGTINRVLVITKLREHMVLFYKRLLDLFGPEVVFIGDAQNRRTPDMVKSIKELNRFIFVSTLFYSGTGLDIPSLDSLFICSAVINNMQIEQLLGRVCRETELLDRTVYVFPNTSVKEIKYMIGNFVQRIISLSVDKLGFKQESYRKHQESDPTSVCTASSREERVLNRIFNSQNR</sequence>
<reference key="1">
    <citation type="submission" date="1992-11" db="EMBL/GenBank/DDBJ databases">
        <authorList>
            <person name="Blinov V.M."/>
        </authorList>
    </citation>
    <scope>NUCLEOTIDE SEQUENCE [GENOMIC DNA]</scope>
</reference>
<dbReference type="EC" id="3.6.4.-"/>
<dbReference type="EMBL" id="X69198">
    <property type="protein sequence ID" value="CAA49063.1"/>
    <property type="molecule type" value="Genomic_DNA"/>
</dbReference>
<dbReference type="PIR" id="A36850">
    <property type="entry name" value="A36850"/>
</dbReference>
<dbReference type="RefSeq" id="NP_042166.1">
    <property type="nucleotide sequence ID" value="NC_001611.1"/>
</dbReference>
<dbReference type="GeneID" id="1486493"/>
<dbReference type="KEGG" id="vg:1486493"/>
<dbReference type="Proteomes" id="UP000002060">
    <property type="component" value="Segment"/>
</dbReference>
<dbReference type="GO" id="GO:0044423">
    <property type="term" value="C:virion component"/>
    <property type="evidence" value="ECO:0007669"/>
    <property type="project" value="UniProtKB-KW"/>
</dbReference>
<dbReference type="GO" id="GO:0005524">
    <property type="term" value="F:ATP binding"/>
    <property type="evidence" value="ECO:0007669"/>
    <property type="project" value="UniProtKB-KW"/>
</dbReference>
<dbReference type="GO" id="GO:0003677">
    <property type="term" value="F:DNA binding"/>
    <property type="evidence" value="ECO:0007669"/>
    <property type="project" value="UniProtKB-KW"/>
</dbReference>
<dbReference type="GO" id="GO:0004386">
    <property type="term" value="F:helicase activity"/>
    <property type="evidence" value="ECO:0007669"/>
    <property type="project" value="UniProtKB-KW"/>
</dbReference>
<dbReference type="GO" id="GO:0016787">
    <property type="term" value="F:hydrolase activity"/>
    <property type="evidence" value="ECO:0007669"/>
    <property type="project" value="UniProtKB-KW"/>
</dbReference>
<dbReference type="GO" id="GO:0006353">
    <property type="term" value="P:DNA-templated transcription termination"/>
    <property type="evidence" value="ECO:0007669"/>
    <property type="project" value="UniProtKB-KW"/>
</dbReference>
<dbReference type="CDD" id="cd18785">
    <property type="entry name" value="SF2_C"/>
    <property type="match status" value="1"/>
</dbReference>
<dbReference type="Gene3D" id="3.40.50.300">
    <property type="entry name" value="P-loop containing nucleotide triphosphate hydrolases"/>
    <property type="match status" value="2"/>
</dbReference>
<dbReference type="InterPro" id="IPR006935">
    <property type="entry name" value="Helicase/UvrB_N"/>
</dbReference>
<dbReference type="InterPro" id="IPR014001">
    <property type="entry name" value="Helicase_ATP-bd"/>
</dbReference>
<dbReference type="InterPro" id="IPR050742">
    <property type="entry name" value="Helicase_Restrict-Modif_Enz"/>
</dbReference>
<dbReference type="InterPro" id="IPR027417">
    <property type="entry name" value="P-loop_NTPase"/>
</dbReference>
<dbReference type="PANTHER" id="PTHR47396:SF1">
    <property type="entry name" value="ATP-DEPENDENT HELICASE IRC3-RELATED"/>
    <property type="match status" value="1"/>
</dbReference>
<dbReference type="PANTHER" id="PTHR47396">
    <property type="entry name" value="TYPE I RESTRICTION ENZYME ECOKI R PROTEIN"/>
    <property type="match status" value="1"/>
</dbReference>
<dbReference type="Pfam" id="PF04851">
    <property type="entry name" value="ResIII"/>
    <property type="match status" value="1"/>
</dbReference>
<dbReference type="SMART" id="SM00487">
    <property type="entry name" value="DEXDc"/>
    <property type="match status" value="1"/>
</dbReference>
<dbReference type="SUPFAM" id="SSF52540">
    <property type="entry name" value="P-loop containing nucleoside triphosphate hydrolases"/>
    <property type="match status" value="1"/>
</dbReference>
<dbReference type="PROSITE" id="PS51192">
    <property type="entry name" value="HELICASE_ATP_BIND_1"/>
    <property type="match status" value="1"/>
</dbReference>
<feature type="chain" id="PRO_0000102179" description="Transcript termination protein OPG145">
    <location>
        <begin position="1"/>
        <end position="493"/>
    </location>
</feature>
<feature type="domain" description="Helicase ATP-binding" evidence="2">
    <location>
        <begin position="100"/>
        <end position="256"/>
    </location>
</feature>
<feature type="short sequence motif" description="DESH box">
    <location>
        <begin position="206"/>
        <end position="209"/>
    </location>
</feature>
<feature type="binding site" evidence="2">
    <location>
        <begin position="113"/>
        <end position="120"/>
    </location>
    <ligand>
        <name>ATP</name>
        <dbReference type="ChEBI" id="CHEBI:30616"/>
    </ligand>
</feature>
<proteinExistence type="inferred from homology"/>